<reference key="1">
    <citation type="journal article" date="2008" name="J. Bacteriol.">
        <title>The complete genome sequence of Actinobacillus pleuropneumoniae L20 (serotype 5b).</title>
        <authorList>
            <person name="Foote S.J."/>
            <person name="Bosse J.T."/>
            <person name="Bouevitch A.B."/>
            <person name="Langford P.R."/>
            <person name="Young N.M."/>
            <person name="Nash J.H.E."/>
        </authorList>
    </citation>
    <scope>NUCLEOTIDE SEQUENCE [LARGE SCALE GENOMIC DNA]</scope>
    <source>
        <strain>L20</strain>
    </source>
</reference>
<keyword id="KW-1185">Reference proteome</keyword>
<keyword id="KW-0687">Ribonucleoprotein</keyword>
<keyword id="KW-0689">Ribosomal protein</keyword>
<keyword id="KW-0694">RNA-binding</keyword>
<keyword id="KW-0699">rRNA-binding</keyword>
<dbReference type="EMBL" id="CP000569">
    <property type="protein sequence ID" value="ABN74860.1"/>
    <property type="molecule type" value="Genomic_DNA"/>
</dbReference>
<dbReference type="RefSeq" id="WP_005599314.1">
    <property type="nucleotide sequence ID" value="NC_009053.1"/>
</dbReference>
<dbReference type="SMR" id="A3N374"/>
<dbReference type="STRING" id="416269.APL_1776"/>
<dbReference type="EnsemblBacteria" id="ABN74860">
    <property type="protein sequence ID" value="ABN74860"/>
    <property type="gene ID" value="APL_1776"/>
</dbReference>
<dbReference type="GeneID" id="48600069"/>
<dbReference type="KEGG" id="apl:APL_1776"/>
<dbReference type="eggNOG" id="COG0098">
    <property type="taxonomic scope" value="Bacteria"/>
</dbReference>
<dbReference type="HOGENOM" id="CLU_065898_2_2_6"/>
<dbReference type="Proteomes" id="UP000001432">
    <property type="component" value="Chromosome"/>
</dbReference>
<dbReference type="GO" id="GO:0015935">
    <property type="term" value="C:small ribosomal subunit"/>
    <property type="evidence" value="ECO:0007669"/>
    <property type="project" value="InterPro"/>
</dbReference>
<dbReference type="GO" id="GO:0019843">
    <property type="term" value="F:rRNA binding"/>
    <property type="evidence" value="ECO:0007669"/>
    <property type="project" value="UniProtKB-UniRule"/>
</dbReference>
<dbReference type="GO" id="GO:0003735">
    <property type="term" value="F:structural constituent of ribosome"/>
    <property type="evidence" value="ECO:0007669"/>
    <property type="project" value="InterPro"/>
</dbReference>
<dbReference type="GO" id="GO:0006412">
    <property type="term" value="P:translation"/>
    <property type="evidence" value="ECO:0007669"/>
    <property type="project" value="UniProtKB-UniRule"/>
</dbReference>
<dbReference type="FunFam" id="3.30.160.20:FF:000001">
    <property type="entry name" value="30S ribosomal protein S5"/>
    <property type="match status" value="1"/>
</dbReference>
<dbReference type="FunFam" id="3.30.230.10:FF:000002">
    <property type="entry name" value="30S ribosomal protein S5"/>
    <property type="match status" value="1"/>
</dbReference>
<dbReference type="Gene3D" id="3.30.160.20">
    <property type="match status" value="1"/>
</dbReference>
<dbReference type="Gene3D" id="3.30.230.10">
    <property type="match status" value="1"/>
</dbReference>
<dbReference type="HAMAP" id="MF_01307_B">
    <property type="entry name" value="Ribosomal_uS5_B"/>
    <property type="match status" value="1"/>
</dbReference>
<dbReference type="InterPro" id="IPR020568">
    <property type="entry name" value="Ribosomal_Su5_D2-typ_SF"/>
</dbReference>
<dbReference type="InterPro" id="IPR000851">
    <property type="entry name" value="Ribosomal_uS5"/>
</dbReference>
<dbReference type="InterPro" id="IPR005712">
    <property type="entry name" value="Ribosomal_uS5_bac-type"/>
</dbReference>
<dbReference type="InterPro" id="IPR005324">
    <property type="entry name" value="Ribosomal_uS5_C"/>
</dbReference>
<dbReference type="InterPro" id="IPR013810">
    <property type="entry name" value="Ribosomal_uS5_N"/>
</dbReference>
<dbReference type="InterPro" id="IPR018192">
    <property type="entry name" value="Ribosomal_uS5_N_CS"/>
</dbReference>
<dbReference type="InterPro" id="IPR014721">
    <property type="entry name" value="Ribsml_uS5_D2-typ_fold_subgr"/>
</dbReference>
<dbReference type="NCBIfam" id="TIGR01021">
    <property type="entry name" value="rpsE_bact"/>
    <property type="match status" value="1"/>
</dbReference>
<dbReference type="PANTHER" id="PTHR48277">
    <property type="entry name" value="MITOCHONDRIAL RIBOSOMAL PROTEIN S5"/>
    <property type="match status" value="1"/>
</dbReference>
<dbReference type="PANTHER" id="PTHR48277:SF1">
    <property type="entry name" value="MITOCHONDRIAL RIBOSOMAL PROTEIN S5"/>
    <property type="match status" value="1"/>
</dbReference>
<dbReference type="Pfam" id="PF00333">
    <property type="entry name" value="Ribosomal_S5"/>
    <property type="match status" value="1"/>
</dbReference>
<dbReference type="Pfam" id="PF03719">
    <property type="entry name" value="Ribosomal_S5_C"/>
    <property type="match status" value="1"/>
</dbReference>
<dbReference type="SUPFAM" id="SSF54768">
    <property type="entry name" value="dsRNA-binding domain-like"/>
    <property type="match status" value="1"/>
</dbReference>
<dbReference type="SUPFAM" id="SSF54211">
    <property type="entry name" value="Ribosomal protein S5 domain 2-like"/>
    <property type="match status" value="1"/>
</dbReference>
<dbReference type="PROSITE" id="PS00585">
    <property type="entry name" value="RIBOSOMAL_S5"/>
    <property type="match status" value="1"/>
</dbReference>
<dbReference type="PROSITE" id="PS50881">
    <property type="entry name" value="S5_DSRBD"/>
    <property type="match status" value="1"/>
</dbReference>
<proteinExistence type="inferred from homology"/>
<feature type="chain" id="PRO_0000323054" description="Small ribosomal subunit protein uS5">
    <location>
        <begin position="1"/>
        <end position="166"/>
    </location>
</feature>
<feature type="domain" description="S5 DRBM" evidence="1">
    <location>
        <begin position="11"/>
        <end position="74"/>
    </location>
</feature>
<sequence length="166" mass="17474">MSNIEKQAGELQEKLIAVNRVSKTVKGGRIMSFTALTVVGDGNGRVGFGYGKAREVPAAIQKAMEKARRNMINVALNEGTLQHPVKGSHTGSRVFMQPASEGTGIIAGGAMRAVLEVAGVRNVLSKAYGSTNPINVVRATIDALANMKSPEMVAAKRGKTVEEILG</sequence>
<protein>
    <recommendedName>
        <fullName evidence="1">Small ribosomal subunit protein uS5</fullName>
    </recommendedName>
    <alternativeName>
        <fullName evidence="2">30S ribosomal protein S5</fullName>
    </alternativeName>
</protein>
<name>RS5_ACTP2</name>
<accession>A3N374</accession>
<gene>
    <name evidence="1" type="primary">rpsE</name>
    <name type="ordered locus">APL_1776</name>
</gene>
<organism>
    <name type="scientific">Actinobacillus pleuropneumoniae serotype 5b (strain L20)</name>
    <dbReference type="NCBI Taxonomy" id="416269"/>
    <lineage>
        <taxon>Bacteria</taxon>
        <taxon>Pseudomonadati</taxon>
        <taxon>Pseudomonadota</taxon>
        <taxon>Gammaproteobacteria</taxon>
        <taxon>Pasteurellales</taxon>
        <taxon>Pasteurellaceae</taxon>
        <taxon>Actinobacillus</taxon>
    </lineage>
</organism>
<comment type="function">
    <text evidence="1">With S4 and S12 plays an important role in translational accuracy.</text>
</comment>
<comment type="function">
    <text evidence="1">Located at the back of the 30S subunit body where it stabilizes the conformation of the head with respect to the body.</text>
</comment>
<comment type="subunit">
    <text evidence="1">Part of the 30S ribosomal subunit. Contacts proteins S4 and S8.</text>
</comment>
<comment type="domain">
    <text>The N-terminal domain interacts with the head of the 30S subunit; the C-terminal domain interacts with the body and contacts protein S4. The interaction surface between S4 and S5 is involved in control of translational fidelity.</text>
</comment>
<comment type="similarity">
    <text evidence="1">Belongs to the universal ribosomal protein uS5 family.</text>
</comment>
<evidence type="ECO:0000255" key="1">
    <source>
        <dbReference type="HAMAP-Rule" id="MF_01307"/>
    </source>
</evidence>
<evidence type="ECO:0000305" key="2"/>